<keyword id="KW-0067">ATP-binding</keyword>
<keyword id="KW-0238">DNA-binding</keyword>
<keyword id="KW-0479">Metal-binding</keyword>
<keyword id="KW-0547">Nucleotide-binding</keyword>
<keyword id="KW-0678">Repressor</keyword>
<keyword id="KW-0804">Transcription</keyword>
<keyword id="KW-0805">Transcription regulation</keyword>
<keyword id="KW-0862">Zinc</keyword>
<keyword id="KW-0863">Zinc-finger</keyword>
<evidence type="ECO:0000255" key="1">
    <source>
        <dbReference type="HAMAP-Rule" id="MF_00440"/>
    </source>
</evidence>
<dbReference type="EMBL" id="CP000546">
    <property type="protein sequence ID" value="ABN01417.1"/>
    <property type="molecule type" value="Genomic_DNA"/>
</dbReference>
<dbReference type="RefSeq" id="WP_004185666.1">
    <property type="nucleotide sequence ID" value="NC_008836.1"/>
</dbReference>
<dbReference type="SMR" id="A2S9K2"/>
<dbReference type="GeneID" id="93061344"/>
<dbReference type="KEGG" id="bml:BMA10229_A2669"/>
<dbReference type="HOGENOM" id="CLU_108412_0_0_4"/>
<dbReference type="Proteomes" id="UP000002283">
    <property type="component" value="Chromosome I"/>
</dbReference>
<dbReference type="GO" id="GO:0005524">
    <property type="term" value="F:ATP binding"/>
    <property type="evidence" value="ECO:0007669"/>
    <property type="project" value="UniProtKB-KW"/>
</dbReference>
<dbReference type="GO" id="GO:0003677">
    <property type="term" value="F:DNA binding"/>
    <property type="evidence" value="ECO:0007669"/>
    <property type="project" value="UniProtKB-KW"/>
</dbReference>
<dbReference type="GO" id="GO:0008270">
    <property type="term" value="F:zinc ion binding"/>
    <property type="evidence" value="ECO:0007669"/>
    <property type="project" value="UniProtKB-UniRule"/>
</dbReference>
<dbReference type="GO" id="GO:0045892">
    <property type="term" value="P:negative regulation of DNA-templated transcription"/>
    <property type="evidence" value="ECO:0007669"/>
    <property type="project" value="UniProtKB-UniRule"/>
</dbReference>
<dbReference type="HAMAP" id="MF_00440">
    <property type="entry name" value="NrdR"/>
    <property type="match status" value="1"/>
</dbReference>
<dbReference type="InterPro" id="IPR005144">
    <property type="entry name" value="ATP-cone_dom"/>
</dbReference>
<dbReference type="InterPro" id="IPR055173">
    <property type="entry name" value="NrdR-like_N"/>
</dbReference>
<dbReference type="InterPro" id="IPR003796">
    <property type="entry name" value="RNR_NrdR-like"/>
</dbReference>
<dbReference type="NCBIfam" id="TIGR00244">
    <property type="entry name" value="transcriptional regulator NrdR"/>
    <property type="match status" value="1"/>
</dbReference>
<dbReference type="PANTHER" id="PTHR30455">
    <property type="entry name" value="TRANSCRIPTIONAL REPRESSOR NRDR"/>
    <property type="match status" value="1"/>
</dbReference>
<dbReference type="PANTHER" id="PTHR30455:SF2">
    <property type="entry name" value="TRANSCRIPTIONAL REPRESSOR NRDR"/>
    <property type="match status" value="1"/>
</dbReference>
<dbReference type="Pfam" id="PF03477">
    <property type="entry name" value="ATP-cone"/>
    <property type="match status" value="1"/>
</dbReference>
<dbReference type="Pfam" id="PF22811">
    <property type="entry name" value="Zn_ribbon_NrdR"/>
    <property type="match status" value="1"/>
</dbReference>
<dbReference type="PROSITE" id="PS51161">
    <property type="entry name" value="ATP_CONE"/>
    <property type="match status" value="1"/>
</dbReference>
<accession>A2S9K2</accession>
<name>NRDR_BURM9</name>
<feature type="chain" id="PRO_1000080723" description="Transcriptional repressor NrdR">
    <location>
        <begin position="1"/>
        <end position="159"/>
    </location>
</feature>
<feature type="domain" description="ATP-cone" evidence="1">
    <location>
        <begin position="49"/>
        <end position="139"/>
    </location>
</feature>
<feature type="zinc finger region" evidence="1">
    <location>
        <begin position="3"/>
        <end position="34"/>
    </location>
</feature>
<sequence length="159" mass="18427">MRCPFCRHDDTQVVDSRVSEDGAAIRRRRRCSACDKRFTTYERVELALPAVVKKDGSRTEFDRRKIVASMQLALRKRPVAADAIDAAVARIEYQLLASGEREVRSEKLGELVMNELRQLDTIAYVRFASVYRRFEDVSEFEDVIEEFRRAAPAKTPRKR</sequence>
<reference key="1">
    <citation type="journal article" date="2010" name="Genome Biol. Evol.">
        <title>Continuing evolution of Burkholderia mallei through genome reduction and large-scale rearrangements.</title>
        <authorList>
            <person name="Losada L."/>
            <person name="Ronning C.M."/>
            <person name="DeShazer D."/>
            <person name="Woods D."/>
            <person name="Fedorova N."/>
            <person name="Kim H.S."/>
            <person name="Shabalina S.A."/>
            <person name="Pearson T.R."/>
            <person name="Brinkac L."/>
            <person name="Tan P."/>
            <person name="Nandi T."/>
            <person name="Crabtree J."/>
            <person name="Badger J."/>
            <person name="Beckstrom-Sternberg S."/>
            <person name="Saqib M."/>
            <person name="Schutzer S.E."/>
            <person name="Keim P."/>
            <person name="Nierman W.C."/>
        </authorList>
    </citation>
    <scope>NUCLEOTIDE SEQUENCE [LARGE SCALE GENOMIC DNA]</scope>
    <source>
        <strain>NCTC 10229</strain>
    </source>
</reference>
<proteinExistence type="inferred from homology"/>
<protein>
    <recommendedName>
        <fullName evidence="1">Transcriptional repressor NrdR</fullName>
    </recommendedName>
</protein>
<organism>
    <name type="scientific">Burkholderia mallei (strain NCTC 10229)</name>
    <dbReference type="NCBI Taxonomy" id="412022"/>
    <lineage>
        <taxon>Bacteria</taxon>
        <taxon>Pseudomonadati</taxon>
        <taxon>Pseudomonadota</taxon>
        <taxon>Betaproteobacteria</taxon>
        <taxon>Burkholderiales</taxon>
        <taxon>Burkholderiaceae</taxon>
        <taxon>Burkholderia</taxon>
        <taxon>pseudomallei group</taxon>
    </lineage>
</organism>
<gene>
    <name evidence="1" type="primary">nrdR</name>
    <name type="ordered locus">BMA10229_A2669</name>
</gene>
<comment type="function">
    <text evidence="1">Negatively regulates transcription of bacterial ribonucleotide reductase nrd genes and operons by binding to NrdR-boxes.</text>
</comment>
<comment type="cofactor">
    <cofactor evidence="1">
        <name>Zn(2+)</name>
        <dbReference type="ChEBI" id="CHEBI:29105"/>
    </cofactor>
    <text evidence="1">Binds 1 zinc ion.</text>
</comment>
<comment type="similarity">
    <text evidence="1">Belongs to the NrdR family.</text>
</comment>